<dbReference type="EMBL" id="HG938372">
    <property type="status" value="NOT_ANNOTATED_CDS"/>
    <property type="molecule type" value="Genomic_DNA"/>
</dbReference>
<dbReference type="RefSeq" id="WP_043205978.1">
    <property type="nucleotide sequence ID" value="NZ_HG938372.1"/>
</dbReference>
<dbReference type="PDB" id="6U08">
    <property type="method" value="X-ray"/>
    <property type="resolution" value="2.49 A"/>
    <property type="chains" value="B/D/F/H=1-123"/>
</dbReference>
<dbReference type="PDBsum" id="6U08"/>
<dbReference type="SMR" id="P0DUH6"/>
<dbReference type="InterPro" id="IPR025680">
    <property type="entry name" value="DddI"/>
</dbReference>
<dbReference type="Pfam" id="PF14430">
    <property type="entry name" value="Imm1"/>
    <property type="match status" value="1"/>
</dbReference>
<sequence length="123" mass="13916">MYADDFDGEIEIDEVDSLVEFLSRRPAFDANNFVLTFEESGFPQLNIFAKNDIAVVYYMDIGENFVSKGNSASGGTEKFYENKLGGEVDLSKDCVVSKEQMIEAAKQFFATKQRPEQLTWSEL</sequence>
<protein>
    <recommendedName>
        <fullName evidence="3">Double-stranded DNA deaminase immunity protein</fullName>
        <shortName evidence="2">DddI</shortName>
    </recommendedName>
</protein>
<feature type="chain" id="PRO_0000452478" description="Double-stranded DNA deaminase immunity protein">
    <location>
        <begin position="1"/>
        <end position="123"/>
    </location>
</feature>
<name>DDDI_BURC1</name>
<evidence type="ECO:0000269" key="1">
    <source>
    </source>
</evidence>
<evidence type="ECO:0000303" key="2">
    <source>
    </source>
</evidence>
<evidence type="ECO:0000305" key="3"/>
<evidence type="ECO:0000305" key="4">
    <source>
    </source>
</evidence>
<evidence type="ECO:0007744" key="5">
    <source>
        <dbReference type="PDB" id="6U08"/>
    </source>
</evidence>
<gene>
    <name evidence="2" type="primary">dddI</name>
    <name type="ORF">I35_7838.5</name>
</gene>
<accession>P0DUH6</accession>
<organism>
    <name type="scientific">Burkholderia cenocepacia (strain H111)</name>
    <dbReference type="NCBI Taxonomy" id="1055524"/>
    <lineage>
        <taxon>Bacteria</taxon>
        <taxon>Pseudomonadati</taxon>
        <taxon>Pseudomonadota</taxon>
        <taxon>Betaproteobacteria</taxon>
        <taxon>Burkholderiales</taxon>
        <taxon>Burkholderiaceae</taxon>
        <taxon>Burkholderia</taxon>
        <taxon>Burkholderia cepacia complex</taxon>
    </lineage>
</organism>
<keyword id="KW-0002">3D-structure</keyword>
<comment type="function">
    <text evidence="4">Immunity protein component of a toxin-immunity protein module, which functions as a cellular contact-dependent growth inhibition (CDI) system. CDI modules allow bacteria to communicate with and inhibit the growth of closely related neighboring bacteria in a contact-dependent fashion. Bacteria that have this module inhibit or kill bacteria without it, giving them a growth advantage. Specifically inhibits the toxic activity of cognate toxin DddA (C-terminal 163 residue fragment) upon expression in E.coli.</text>
</comment>
<comment type="subunit">
    <text evidence="1">The toxic domain forms a 1:1 complex with the DddI immunity protein. This protein blocks the active site of the toxin.</text>
</comment>
<comment type="disruption phenotype">
    <text evidence="1">A double dddA-dddI deletion has a 100-fold growth disadvantage compared to wild-type in competition experiments.</text>
</comment>
<reference key="1">
    <citation type="journal article" date="2014" name="Genome Announc.">
        <title>Genome Sequence of Burkholderia cenocepacia H111, a Cystic Fibrosis Airway Isolate.</title>
        <authorList>
            <person name="Carlier A."/>
            <person name="Agnoli K."/>
            <person name="Pessi G."/>
            <person name="Suppiger A."/>
            <person name="Jenul C."/>
            <person name="Schmid N."/>
            <person name="Tuemmler B."/>
            <person name="Pinto-Carbo M."/>
            <person name="Eberl L."/>
        </authorList>
    </citation>
    <scope>NUCLEOTIDE SEQUENCE [LARGE SCALE GENOMIC DNA]</scope>
    <source>
        <strain>H111</strain>
    </source>
</reference>
<reference evidence="5" key="2">
    <citation type="journal article" date="2020" name="Nature">
        <title>A bacterial cytidine deaminase toxin enables CRISPR-free mitochondrial base editing.</title>
        <authorList>
            <person name="Mok B.Y."/>
            <person name="de Moraes M.H."/>
            <person name="Zeng J."/>
            <person name="Bosch D.E."/>
            <person name="Kotrys A.V."/>
            <person name="Raguram A."/>
            <person name="Hsu F."/>
            <person name="Radey M.C."/>
            <person name="Peterson S.B."/>
            <person name="Mootha V.K."/>
            <person name="Mougous J.D."/>
            <person name="Liu D.R."/>
        </authorList>
    </citation>
    <scope>X-RAY CRYSTALLOGRAPHY (2.49 ANGSTROMS) IN COMPLEX WITH DDDA TOXIN DOMAIN</scope>
    <scope>FUNCTION</scope>
    <scope>SUBUNIT</scope>
    <scope>DISRUPTION PHENOTYPE</scope>
    <source>
        <strain>H111</strain>
    </source>
</reference>
<proteinExistence type="evidence at protein level"/>